<protein>
    <recommendedName>
        <fullName evidence="1">Proline--tRNA ligase</fullName>
        <ecNumber evidence="1">6.1.1.15</ecNumber>
    </recommendedName>
    <alternativeName>
        <fullName evidence="1">Prolyl-tRNA synthetase</fullName>
        <shortName evidence="1">ProRS</shortName>
    </alternativeName>
</protein>
<gene>
    <name evidence="1" type="primary">proS</name>
    <name type="ordered locus">BCAH187_A3866</name>
</gene>
<evidence type="ECO:0000255" key="1">
    <source>
        <dbReference type="HAMAP-Rule" id="MF_01569"/>
    </source>
</evidence>
<name>SYP_BACC7</name>
<sequence length="566" mass="63122">MKQSMVFSPTLREVPADAEIKSHQLLLRAGFMRQNASGIYSFLPFGLKVLHKVERIVREEMERAGAVELLMPAMQAAELWQESGRWYSYGSELMRMKDRNAREFALGATHEEVITDLVRDEVKSYKKLPLTLYQIQTKFRDEQRPRFGLLRGREFLMKDAYSFHATQESLDEVYDRLYKAYSNIFARCGLNFRAVIADSGAMGGKDTHEFMVLSDVGEDTIAYSDTSDYAANIEMAPVVATYTKSDEAEKALEKVATPDQKAIEEVSAFLNIEAEKCIKSMVFKVDEKLVVVLVRGDHEVNDVKVKNVYGASVVELASHEEVKELLNCEVGSLGPIGVTGDIEIIADHAVASIVNGCSGANEEGFHYVNVNPERDFKVSQYTDLRFIQEGDQSPDGNGTILFARGIEVGHVFKLGTRYSEAMNATFLDENGKTQPLIMGCYGIGVSRTVAAIAEQFNDENGLVWPKAVAPFHVHVIPVNMKSDAQREMGENIYNSLQEQGYEVLLDDRAERAGVKFADADLFGLPVRVTVGKKADEGIVEVKVRATGESEEVKVEELQTYIANILK</sequence>
<proteinExistence type="inferred from homology"/>
<organism>
    <name type="scientific">Bacillus cereus (strain AH187)</name>
    <dbReference type="NCBI Taxonomy" id="405534"/>
    <lineage>
        <taxon>Bacteria</taxon>
        <taxon>Bacillati</taxon>
        <taxon>Bacillota</taxon>
        <taxon>Bacilli</taxon>
        <taxon>Bacillales</taxon>
        <taxon>Bacillaceae</taxon>
        <taxon>Bacillus</taxon>
        <taxon>Bacillus cereus group</taxon>
    </lineage>
</organism>
<reference key="1">
    <citation type="submission" date="2008-10" db="EMBL/GenBank/DDBJ databases">
        <title>Genome sequence of Bacillus cereus AH187.</title>
        <authorList>
            <person name="Dodson R.J."/>
            <person name="Durkin A.S."/>
            <person name="Rosovitz M.J."/>
            <person name="Rasko D.A."/>
            <person name="Kolsto A.B."/>
            <person name="Okstad O.A."/>
            <person name="Ravel J."/>
            <person name="Sutton G."/>
        </authorList>
    </citation>
    <scope>NUCLEOTIDE SEQUENCE [LARGE SCALE GENOMIC DNA]</scope>
    <source>
        <strain>AH187</strain>
    </source>
</reference>
<comment type="function">
    <text evidence="1">Catalyzes the attachment of proline to tRNA(Pro) in a two-step reaction: proline is first activated by ATP to form Pro-AMP and then transferred to the acceptor end of tRNA(Pro). As ProRS can inadvertently accommodate and process non-cognate amino acids such as alanine and cysteine, to avoid such errors it has two additional distinct editing activities against alanine. One activity is designated as 'pretransfer' editing and involves the tRNA(Pro)-independent hydrolysis of activated Ala-AMP. The other activity is designated 'posttransfer' editing and involves deacylation of mischarged Ala-tRNA(Pro). The misacylated Cys-tRNA(Pro) is not edited by ProRS.</text>
</comment>
<comment type="catalytic activity">
    <reaction evidence="1">
        <text>tRNA(Pro) + L-proline + ATP = L-prolyl-tRNA(Pro) + AMP + diphosphate</text>
        <dbReference type="Rhea" id="RHEA:14305"/>
        <dbReference type="Rhea" id="RHEA-COMP:9700"/>
        <dbReference type="Rhea" id="RHEA-COMP:9702"/>
        <dbReference type="ChEBI" id="CHEBI:30616"/>
        <dbReference type="ChEBI" id="CHEBI:33019"/>
        <dbReference type="ChEBI" id="CHEBI:60039"/>
        <dbReference type="ChEBI" id="CHEBI:78442"/>
        <dbReference type="ChEBI" id="CHEBI:78532"/>
        <dbReference type="ChEBI" id="CHEBI:456215"/>
        <dbReference type="EC" id="6.1.1.15"/>
    </reaction>
</comment>
<comment type="subunit">
    <text evidence="1">Homodimer.</text>
</comment>
<comment type="subcellular location">
    <subcellularLocation>
        <location evidence="1">Cytoplasm</location>
    </subcellularLocation>
</comment>
<comment type="domain">
    <text evidence="1">Consists of three domains: the N-terminal catalytic domain, the editing domain and the C-terminal anticodon-binding domain.</text>
</comment>
<comment type="similarity">
    <text evidence="1">Belongs to the class-II aminoacyl-tRNA synthetase family. ProS type 1 subfamily.</text>
</comment>
<dbReference type="EC" id="6.1.1.15" evidence="1"/>
<dbReference type="EMBL" id="CP001177">
    <property type="protein sequence ID" value="ACJ77606.1"/>
    <property type="molecule type" value="Genomic_DNA"/>
</dbReference>
<dbReference type="SMR" id="B7HLF2"/>
<dbReference type="KEGG" id="bcr:BCAH187_A3866"/>
<dbReference type="HOGENOM" id="CLU_016739_0_0_9"/>
<dbReference type="Proteomes" id="UP000002214">
    <property type="component" value="Chromosome"/>
</dbReference>
<dbReference type="GO" id="GO:0005829">
    <property type="term" value="C:cytosol"/>
    <property type="evidence" value="ECO:0007669"/>
    <property type="project" value="TreeGrafter"/>
</dbReference>
<dbReference type="GO" id="GO:0002161">
    <property type="term" value="F:aminoacyl-tRNA deacylase activity"/>
    <property type="evidence" value="ECO:0007669"/>
    <property type="project" value="InterPro"/>
</dbReference>
<dbReference type="GO" id="GO:0005524">
    <property type="term" value="F:ATP binding"/>
    <property type="evidence" value="ECO:0007669"/>
    <property type="project" value="UniProtKB-UniRule"/>
</dbReference>
<dbReference type="GO" id="GO:0140096">
    <property type="term" value="F:catalytic activity, acting on a protein"/>
    <property type="evidence" value="ECO:0007669"/>
    <property type="project" value="UniProtKB-ARBA"/>
</dbReference>
<dbReference type="GO" id="GO:0004827">
    <property type="term" value="F:proline-tRNA ligase activity"/>
    <property type="evidence" value="ECO:0007669"/>
    <property type="project" value="UniProtKB-UniRule"/>
</dbReference>
<dbReference type="GO" id="GO:0016740">
    <property type="term" value="F:transferase activity"/>
    <property type="evidence" value="ECO:0007669"/>
    <property type="project" value="UniProtKB-ARBA"/>
</dbReference>
<dbReference type="GO" id="GO:0006433">
    <property type="term" value="P:prolyl-tRNA aminoacylation"/>
    <property type="evidence" value="ECO:0007669"/>
    <property type="project" value="UniProtKB-UniRule"/>
</dbReference>
<dbReference type="CDD" id="cd04334">
    <property type="entry name" value="ProRS-INS"/>
    <property type="match status" value="1"/>
</dbReference>
<dbReference type="CDD" id="cd00861">
    <property type="entry name" value="ProRS_anticodon_short"/>
    <property type="match status" value="1"/>
</dbReference>
<dbReference type="CDD" id="cd00779">
    <property type="entry name" value="ProRS_core_prok"/>
    <property type="match status" value="1"/>
</dbReference>
<dbReference type="FunFam" id="3.30.930.10:FF:000043">
    <property type="entry name" value="Proline--tRNA ligase"/>
    <property type="match status" value="1"/>
</dbReference>
<dbReference type="FunFam" id="3.30.930.10:FF:000065">
    <property type="entry name" value="Proline--tRNA ligase"/>
    <property type="match status" value="1"/>
</dbReference>
<dbReference type="FunFam" id="3.40.50.800:FF:000011">
    <property type="entry name" value="Proline--tRNA ligase"/>
    <property type="match status" value="1"/>
</dbReference>
<dbReference type="Gene3D" id="3.40.50.800">
    <property type="entry name" value="Anticodon-binding domain"/>
    <property type="match status" value="1"/>
</dbReference>
<dbReference type="Gene3D" id="3.30.930.10">
    <property type="entry name" value="Bira Bifunctional Protein, Domain 2"/>
    <property type="match status" value="2"/>
</dbReference>
<dbReference type="HAMAP" id="MF_01569">
    <property type="entry name" value="Pro_tRNA_synth_type1"/>
    <property type="match status" value="1"/>
</dbReference>
<dbReference type="InterPro" id="IPR002314">
    <property type="entry name" value="aa-tRNA-synt_IIb"/>
</dbReference>
<dbReference type="InterPro" id="IPR006195">
    <property type="entry name" value="aa-tRNA-synth_II"/>
</dbReference>
<dbReference type="InterPro" id="IPR045864">
    <property type="entry name" value="aa-tRNA-synth_II/BPL/LPL"/>
</dbReference>
<dbReference type="InterPro" id="IPR004154">
    <property type="entry name" value="Anticodon-bd"/>
</dbReference>
<dbReference type="InterPro" id="IPR036621">
    <property type="entry name" value="Anticodon-bd_dom_sf"/>
</dbReference>
<dbReference type="InterPro" id="IPR002316">
    <property type="entry name" value="Pro-tRNA-ligase_IIa"/>
</dbReference>
<dbReference type="InterPro" id="IPR004500">
    <property type="entry name" value="Pro-tRNA-synth_IIa_bac-type"/>
</dbReference>
<dbReference type="InterPro" id="IPR023717">
    <property type="entry name" value="Pro-tRNA-Synthase_IIa_type1"/>
</dbReference>
<dbReference type="InterPro" id="IPR050062">
    <property type="entry name" value="Pro-tRNA_synthetase"/>
</dbReference>
<dbReference type="InterPro" id="IPR044140">
    <property type="entry name" value="ProRS_anticodon_short"/>
</dbReference>
<dbReference type="InterPro" id="IPR033730">
    <property type="entry name" value="ProRS_core_prok"/>
</dbReference>
<dbReference type="InterPro" id="IPR036754">
    <property type="entry name" value="YbaK/aa-tRNA-synt-asso_dom_sf"/>
</dbReference>
<dbReference type="InterPro" id="IPR007214">
    <property type="entry name" value="YbaK/aa-tRNA-synth-assoc-dom"/>
</dbReference>
<dbReference type="NCBIfam" id="NF006625">
    <property type="entry name" value="PRK09194.1"/>
    <property type="match status" value="1"/>
</dbReference>
<dbReference type="NCBIfam" id="TIGR00409">
    <property type="entry name" value="proS_fam_II"/>
    <property type="match status" value="1"/>
</dbReference>
<dbReference type="PANTHER" id="PTHR42753">
    <property type="entry name" value="MITOCHONDRIAL RIBOSOME PROTEIN L39/PROLYL-TRNA LIGASE FAMILY MEMBER"/>
    <property type="match status" value="1"/>
</dbReference>
<dbReference type="PANTHER" id="PTHR42753:SF2">
    <property type="entry name" value="PROLINE--TRNA LIGASE"/>
    <property type="match status" value="1"/>
</dbReference>
<dbReference type="Pfam" id="PF03129">
    <property type="entry name" value="HGTP_anticodon"/>
    <property type="match status" value="1"/>
</dbReference>
<dbReference type="Pfam" id="PF00587">
    <property type="entry name" value="tRNA-synt_2b"/>
    <property type="match status" value="1"/>
</dbReference>
<dbReference type="Pfam" id="PF04073">
    <property type="entry name" value="tRNA_edit"/>
    <property type="match status" value="1"/>
</dbReference>
<dbReference type="PIRSF" id="PIRSF001535">
    <property type="entry name" value="ProRS_1"/>
    <property type="match status" value="1"/>
</dbReference>
<dbReference type="PRINTS" id="PR01046">
    <property type="entry name" value="TRNASYNTHPRO"/>
</dbReference>
<dbReference type="SUPFAM" id="SSF52954">
    <property type="entry name" value="Class II aaRS ABD-related"/>
    <property type="match status" value="1"/>
</dbReference>
<dbReference type="SUPFAM" id="SSF55681">
    <property type="entry name" value="Class II aaRS and biotin synthetases"/>
    <property type="match status" value="1"/>
</dbReference>
<dbReference type="SUPFAM" id="SSF55826">
    <property type="entry name" value="YbaK/ProRS associated domain"/>
    <property type="match status" value="1"/>
</dbReference>
<dbReference type="PROSITE" id="PS50862">
    <property type="entry name" value="AA_TRNA_LIGASE_II"/>
    <property type="match status" value="1"/>
</dbReference>
<keyword id="KW-0030">Aminoacyl-tRNA synthetase</keyword>
<keyword id="KW-0067">ATP-binding</keyword>
<keyword id="KW-0963">Cytoplasm</keyword>
<keyword id="KW-0436">Ligase</keyword>
<keyword id="KW-0547">Nucleotide-binding</keyword>
<keyword id="KW-0648">Protein biosynthesis</keyword>
<accession>B7HLF2</accession>
<feature type="chain" id="PRO_1000199351" description="Proline--tRNA ligase">
    <location>
        <begin position="1"/>
        <end position="566"/>
    </location>
</feature>